<name>CYC6_ALAES</name>
<sequence length="86" mass="9233">IDINNGENIFTANCSACHAGGNNVIMPEKTLKKDALADNKMVSVNAITYQVTNGKNAMPAFGSRLAETDIEDVANFVLTQSDKGWD</sequence>
<organism>
    <name type="scientific">Alaria esculenta</name>
    <name type="common">Irish wakame</name>
    <name type="synonym">Fucus esculentus</name>
    <dbReference type="NCBI Taxonomy" id="2889"/>
    <lineage>
        <taxon>Eukaryota</taxon>
        <taxon>Sar</taxon>
        <taxon>Stramenopiles</taxon>
        <taxon>Ochrophyta</taxon>
        <taxon>PX clade</taxon>
        <taxon>Phaeophyceae</taxon>
        <taxon>Laminariales</taxon>
        <taxon>Alariaceae</taxon>
        <taxon>Alaria</taxon>
    </lineage>
</organism>
<comment type="function">
    <text>Functions as an electron carrier between membrane-bound cytochrome b6-f and photosystem I in oxygenic photosynthesis.</text>
</comment>
<comment type="subunit">
    <text evidence="1">Monomer.</text>
</comment>
<comment type="subcellular location">
    <subcellularLocation>
        <location>Plastid</location>
        <location>Chloroplast thylakoid lumen</location>
    </subcellularLocation>
</comment>
<comment type="PTM">
    <text>Binds 1 heme c group covalently per subunit.</text>
</comment>
<comment type="similarity">
    <text evidence="3">Belongs to the cytochrome c family. PetJ subfamily.</text>
</comment>
<feature type="chain" id="PRO_0000208671" description="Cytochrome c6">
    <location>
        <begin position="1"/>
        <end position="86"/>
    </location>
</feature>
<feature type="binding site" description="covalent" evidence="2">
    <location>
        <position position="14"/>
    </location>
    <ligand>
        <name>heme c</name>
        <dbReference type="ChEBI" id="CHEBI:61717"/>
    </ligand>
</feature>
<feature type="binding site" description="covalent" evidence="2">
    <location>
        <position position="17"/>
    </location>
    <ligand>
        <name>heme c</name>
        <dbReference type="ChEBI" id="CHEBI:61717"/>
    </ligand>
</feature>
<feature type="binding site" description="axial binding residue">
    <location>
        <position position="18"/>
    </location>
    <ligand>
        <name>heme c</name>
        <dbReference type="ChEBI" id="CHEBI:61717"/>
    </ligand>
    <ligandPart>
        <name>Fe</name>
        <dbReference type="ChEBI" id="CHEBI:18248"/>
    </ligandPart>
</feature>
<feature type="binding site" description="axial binding residue">
    <location>
        <position position="58"/>
    </location>
    <ligand>
        <name>heme c</name>
        <dbReference type="ChEBI" id="CHEBI:61717"/>
    </ligand>
    <ligandPart>
        <name>Fe</name>
        <dbReference type="ChEBI" id="CHEBI:18248"/>
    </ligandPart>
</feature>
<protein>
    <recommendedName>
        <fullName>Cytochrome c6</fullName>
    </recommendedName>
    <alternativeName>
        <fullName>Cytochrome c-553</fullName>
    </alternativeName>
    <alternativeName>
        <fullName>Cytochrome c553</fullName>
    </alternativeName>
    <alternativeName>
        <fullName>Soluble cytochrome f</fullName>
    </alternativeName>
</protein>
<accession>P00109</accession>
<dbReference type="PIR" id="A00101">
    <property type="entry name" value="CCAU6"/>
</dbReference>
<dbReference type="SMR" id="P00109"/>
<dbReference type="GO" id="GO:0009543">
    <property type="term" value="C:chloroplast thylakoid lumen"/>
    <property type="evidence" value="ECO:0007669"/>
    <property type="project" value="UniProtKB-SubCell"/>
</dbReference>
<dbReference type="GO" id="GO:0009055">
    <property type="term" value="F:electron transfer activity"/>
    <property type="evidence" value="ECO:0007669"/>
    <property type="project" value="InterPro"/>
</dbReference>
<dbReference type="GO" id="GO:0020037">
    <property type="term" value="F:heme binding"/>
    <property type="evidence" value="ECO:0007669"/>
    <property type="project" value="InterPro"/>
</dbReference>
<dbReference type="GO" id="GO:0005506">
    <property type="term" value="F:iron ion binding"/>
    <property type="evidence" value="ECO:0007669"/>
    <property type="project" value="InterPro"/>
</dbReference>
<dbReference type="GO" id="GO:0015979">
    <property type="term" value="P:photosynthesis"/>
    <property type="evidence" value="ECO:0007669"/>
    <property type="project" value="UniProtKB-KW"/>
</dbReference>
<dbReference type="FunFam" id="1.10.760.10:FF:000038">
    <property type="entry name" value="Cytochrome c6"/>
    <property type="match status" value="1"/>
</dbReference>
<dbReference type="Gene3D" id="1.10.760.10">
    <property type="entry name" value="Cytochrome c-like domain"/>
    <property type="match status" value="1"/>
</dbReference>
<dbReference type="HAMAP" id="MF_00594">
    <property type="entry name" value="Cytc_PetJ"/>
    <property type="match status" value="1"/>
</dbReference>
<dbReference type="InterPro" id="IPR009056">
    <property type="entry name" value="Cyt_c-like_dom"/>
</dbReference>
<dbReference type="InterPro" id="IPR036909">
    <property type="entry name" value="Cyt_c-like_dom_sf"/>
</dbReference>
<dbReference type="InterPro" id="IPR023655">
    <property type="entry name" value="Cyt_C6"/>
</dbReference>
<dbReference type="InterPro" id="IPR008168">
    <property type="entry name" value="Cyt_C_IC"/>
</dbReference>
<dbReference type="PANTHER" id="PTHR34688">
    <property type="entry name" value="CYTOCHROME C6, CHLOROPLASTIC"/>
    <property type="match status" value="1"/>
</dbReference>
<dbReference type="PANTHER" id="PTHR34688:SF2">
    <property type="entry name" value="CYTOCHROME C6, CHLOROPLASTIC"/>
    <property type="match status" value="1"/>
</dbReference>
<dbReference type="Pfam" id="PF13442">
    <property type="entry name" value="Cytochrome_CBB3"/>
    <property type="match status" value="1"/>
</dbReference>
<dbReference type="PRINTS" id="PR00605">
    <property type="entry name" value="CYTCHROMECIC"/>
</dbReference>
<dbReference type="SUPFAM" id="SSF46626">
    <property type="entry name" value="Cytochrome c"/>
    <property type="match status" value="1"/>
</dbReference>
<dbReference type="PROSITE" id="PS51007">
    <property type="entry name" value="CYTC"/>
    <property type="match status" value="1"/>
</dbReference>
<gene>
    <name type="primary">petJ</name>
</gene>
<reference key="1">
    <citation type="journal article" date="1975" name="Biochem. J.">
        <title>The amino acid sequence of cytochrome f from the brown alga Alaria esculenta (L.) Grev.</title>
        <authorList>
            <person name="Laycock M.V."/>
        </authorList>
    </citation>
    <scope>PROTEIN SEQUENCE</scope>
</reference>
<proteinExistence type="evidence at protein level"/>
<evidence type="ECO:0000250" key="1"/>
<evidence type="ECO:0000269" key="2">
    <source>
    </source>
</evidence>
<evidence type="ECO:0000305" key="3"/>
<keyword id="KW-0150">Chloroplast</keyword>
<keyword id="KW-0903">Direct protein sequencing</keyword>
<keyword id="KW-0249">Electron transport</keyword>
<keyword id="KW-0349">Heme</keyword>
<keyword id="KW-0408">Iron</keyword>
<keyword id="KW-0479">Metal-binding</keyword>
<keyword id="KW-0602">Photosynthesis</keyword>
<keyword id="KW-0934">Plastid</keyword>
<keyword id="KW-0793">Thylakoid</keyword>
<keyword id="KW-0813">Transport</keyword>